<feature type="chain" id="PRO_0000120840" description="Uracil phosphoribosyltransferase">
    <location>
        <begin position="1"/>
        <end position="214"/>
    </location>
</feature>
<feature type="binding site" evidence="1">
    <location>
        <position position="81"/>
    </location>
    <ligand>
        <name>5-phospho-alpha-D-ribose 1-diphosphate</name>
        <dbReference type="ChEBI" id="CHEBI:58017"/>
    </ligand>
</feature>
<feature type="binding site" evidence="1">
    <location>
        <position position="106"/>
    </location>
    <ligand>
        <name>5-phospho-alpha-D-ribose 1-diphosphate</name>
        <dbReference type="ChEBI" id="CHEBI:58017"/>
    </ligand>
</feature>
<feature type="binding site" evidence="1">
    <location>
        <begin position="133"/>
        <end position="141"/>
    </location>
    <ligand>
        <name>5-phospho-alpha-D-ribose 1-diphosphate</name>
        <dbReference type="ChEBI" id="CHEBI:58017"/>
    </ligand>
</feature>
<feature type="binding site" evidence="1">
    <location>
        <position position="196"/>
    </location>
    <ligand>
        <name>uracil</name>
        <dbReference type="ChEBI" id="CHEBI:17568"/>
    </ligand>
</feature>
<feature type="binding site" evidence="1">
    <location>
        <begin position="201"/>
        <end position="203"/>
    </location>
    <ligand>
        <name>uracil</name>
        <dbReference type="ChEBI" id="CHEBI:17568"/>
    </ligand>
</feature>
<feature type="binding site" evidence="1">
    <location>
        <position position="202"/>
    </location>
    <ligand>
        <name>5-phospho-alpha-D-ribose 1-diphosphate</name>
        <dbReference type="ChEBI" id="CHEBI:58017"/>
    </ligand>
</feature>
<proteinExistence type="inferred from homology"/>
<name>UPP_LEGPA</name>
<sequence>MDFNQVKVINHPLIQHKLTIMRKKETSTVKFRTLMHEVSMLLAYEVTRDLEIEYEEIETPLATMQSPVLKGKKLVFVSILRAGNGLLDGMLQLVPTARIGHIGLYRDPKTLEAVEYYFKLPEHTQDRDVIVVDPMLATGNSAIAAVKEVKALHPKSIKFLCLLAAPEGISNFHGEHPDVPIFTAAIDEQLNDHGYIVPGLGDAGDRLYGTKLAH</sequence>
<comment type="function">
    <text evidence="1">Catalyzes the conversion of uracil and 5-phospho-alpha-D-ribose 1-diphosphate (PRPP) to UMP and diphosphate.</text>
</comment>
<comment type="catalytic activity">
    <reaction evidence="1">
        <text>UMP + diphosphate = 5-phospho-alpha-D-ribose 1-diphosphate + uracil</text>
        <dbReference type="Rhea" id="RHEA:13017"/>
        <dbReference type="ChEBI" id="CHEBI:17568"/>
        <dbReference type="ChEBI" id="CHEBI:33019"/>
        <dbReference type="ChEBI" id="CHEBI:57865"/>
        <dbReference type="ChEBI" id="CHEBI:58017"/>
        <dbReference type="EC" id="2.4.2.9"/>
    </reaction>
</comment>
<comment type="cofactor">
    <cofactor evidence="1">
        <name>Mg(2+)</name>
        <dbReference type="ChEBI" id="CHEBI:18420"/>
    </cofactor>
    <text evidence="1">Binds 1 Mg(2+) ion per subunit. The magnesium is bound as Mg-PRPP.</text>
</comment>
<comment type="activity regulation">
    <text evidence="1">Allosterically activated by GTP.</text>
</comment>
<comment type="pathway">
    <text evidence="1">Pyrimidine metabolism; UMP biosynthesis via salvage pathway; UMP from uracil: step 1/1.</text>
</comment>
<comment type="similarity">
    <text evidence="1">Belongs to the UPRTase family.</text>
</comment>
<organism>
    <name type="scientific">Legionella pneumophila (strain Paris)</name>
    <dbReference type="NCBI Taxonomy" id="297246"/>
    <lineage>
        <taxon>Bacteria</taxon>
        <taxon>Pseudomonadati</taxon>
        <taxon>Pseudomonadota</taxon>
        <taxon>Gammaproteobacteria</taxon>
        <taxon>Legionellales</taxon>
        <taxon>Legionellaceae</taxon>
        <taxon>Legionella</taxon>
    </lineage>
</organism>
<keyword id="KW-0021">Allosteric enzyme</keyword>
<keyword id="KW-0328">Glycosyltransferase</keyword>
<keyword id="KW-0342">GTP-binding</keyword>
<keyword id="KW-0460">Magnesium</keyword>
<keyword id="KW-0547">Nucleotide-binding</keyword>
<keyword id="KW-0808">Transferase</keyword>
<gene>
    <name evidence="1" type="primary">upp</name>
    <name type="ordered locus">lpp2196</name>
</gene>
<protein>
    <recommendedName>
        <fullName evidence="1">Uracil phosphoribosyltransferase</fullName>
        <ecNumber evidence="1">2.4.2.9</ecNumber>
    </recommendedName>
    <alternativeName>
        <fullName evidence="1">UMP pyrophosphorylase</fullName>
    </alternativeName>
    <alternativeName>
        <fullName evidence="1">UPRTase</fullName>
    </alternativeName>
</protein>
<evidence type="ECO:0000255" key="1">
    <source>
        <dbReference type="HAMAP-Rule" id="MF_01218"/>
    </source>
</evidence>
<reference key="1">
    <citation type="journal article" date="2004" name="Nat. Genet.">
        <title>Evidence in the Legionella pneumophila genome for exploitation of host cell functions and high genome plasticity.</title>
        <authorList>
            <person name="Cazalet C."/>
            <person name="Rusniok C."/>
            <person name="Brueggemann H."/>
            <person name="Zidane N."/>
            <person name="Magnier A."/>
            <person name="Ma L."/>
            <person name="Tichit M."/>
            <person name="Jarraud S."/>
            <person name="Bouchier C."/>
            <person name="Vandenesch F."/>
            <person name="Kunst F."/>
            <person name="Etienne J."/>
            <person name="Glaser P."/>
            <person name="Buchrieser C."/>
        </authorList>
    </citation>
    <scope>NUCLEOTIDE SEQUENCE [LARGE SCALE GENOMIC DNA]</scope>
    <source>
        <strain>Paris</strain>
    </source>
</reference>
<accession>Q5X340</accession>
<dbReference type="EC" id="2.4.2.9" evidence="1"/>
<dbReference type="EMBL" id="CR628336">
    <property type="protein sequence ID" value="CAH13348.1"/>
    <property type="molecule type" value="Genomic_DNA"/>
</dbReference>
<dbReference type="RefSeq" id="WP_011216146.1">
    <property type="nucleotide sequence ID" value="NC_006368.1"/>
</dbReference>
<dbReference type="SMR" id="Q5X340"/>
<dbReference type="KEGG" id="lpp:lpp2196"/>
<dbReference type="LegioList" id="lpp2196"/>
<dbReference type="HOGENOM" id="CLU_067096_2_2_6"/>
<dbReference type="UniPathway" id="UPA00574">
    <property type="reaction ID" value="UER00636"/>
</dbReference>
<dbReference type="GO" id="GO:0005525">
    <property type="term" value="F:GTP binding"/>
    <property type="evidence" value="ECO:0007669"/>
    <property type="project" value="UniProtKB-KW"/>
</dbReference>
<dbReference type="GO" id="GO:0000287">
    <property type="term" value="F:magnesium ion binding"/>
    <property type="evidence" value="ECO:0007669"/>
    <property type="project" value="UniProtKB-UniRule"/>
</dbReference>
<dbReference type="GO" id="GO:0004845">
    <property type="term" value="F:uracil phosphoribosyltransferase activity"/>
    <property type="evidence" value="ECO:0007669"/>
    <property type="project" value="UniProtKB-UniRule"/>
</dbReference>
<dbReference type="GO" id="GO:0044206">
    <property type="term" value="P:UMP salvage"/>
    <property type="evidence" value="ECO:0007669"/>
    <property type="project" value="UniProtKB-UniRule"/>
</dbReference>
<dbReference type="GO" id="GO:0006223">
    <property type="term" value="P:uracil salvage"/>
    <property type="evidence" value="ECO:0007669"/>
    <property type="project" value="InterPro"/>
</dbReference>
<dbReference type="CDD" id="cd06223">
    <property type="entry name" value="PRTases_typeI"/>
    <property type="match status" value="1"/>
</dbReference>
<dbReference type="FunFam" id="3.40.50.2020:FF:000003">
    <property type="entry name" value="Uracil phosphoribosyltransferase"/>
    <property type="match status" value="1"/>
</dbReference>
<dbReference type="Gene3D" id="3.40.50.2020">
    <property type="match status" value="1"/>
</dbReference>
<dbReference type="HAMAP" id="MF_01218_B">
    <property type="entry name" value="Upp_B"/>
    <property type="match status" value="1"/>
</dbReference>
<dbReference type="InterPro" id="IPR000836">
    <property type="entry name" value="PRibTrfase_dom"/>
</dbReference>
<dbReference type="InterPro" id="IPR029057">
    <property type="entry name" value="PRTase-like"/>
</dbReference>
<dbReference type="InterPro" id="IPR034332">
    <property type="entry name" value="Upp_B"/>
</dbReference>
<dbReference type="InterPro" id="IPR050054">
    <property type="entry name" value="UPRTase/APRTase"/>
</dbReference>
<dbReference type="InterPro" id="IPR005765">
    <property type="entry name" value="Ura_phspho_trans"/>
</dbReference>
<dbReference type="NCBIfam" id="NF001097">
    <property type="entry name" value="PRK00129.1"/>
    <property type="match status" value="1"/>
</dbReference>
<dbReference type="NCBIfam" id="TIGR01091">
    <property type="entry name" value="upp"/>
    <property type="match status" value="1"/>
</dbReference>
<dbReference type="PANTHER" id="PTHR32315">
    <property type="entry name" value="ADENINE PHOSPHORIBOSYLTRANSFERASE"/>
    <property type="match status" value="1"/>
</dbReference>
<dbReference type="PANTHER" id="PTHR32315:SF4">
    <property type="entry name" value="URACIL PHOSPHORIBOSYLTRANSFERASE, CHLOROPLASTIC"/>
    <property type="match status" value="1"/>
</dbReference>
<dbReference type="Pfam" id="PF14681">
    <property type="entry name" value="UPRTase"/>
    <property type="match status" value="1"/>
</dbReference>
<dbReference type="SUPFAM" id="SSF53271">
    <property type="entry name" value="PRTase-like"/>
    <property type="match status" value="1"/>
</dbReference>